<reference key="1">
    <citation type="journal article" date="2007" name="Nature">
        <title>Evolution of genes and genomes on the Drosophila phylogeny.</title>
        <authorList>
            <consortium name="Drosophila 12 genomes consortium"/>
        </authorList>
    </citation>
    <scope>NUCLEOTIDE SEQUENCE [LARGE SCALE GENOMIC DNA]</scope>
    <source>
        <strain>Tucson 14024-0371.13</strain>
    </source>
</reference>
<name>SUR8_DROAN</name>
<protein>
    <recommendedName>
        <fullName>Leucine-rich repeat protein soc-2 homolog</fullName>
    </recommendedName>
    <alternativeName>
        <fullName>Protein Sur-8 homolog</fullName>
    </alternativeName>
    <alternativeName>
        <fullName>Protein soc-2 homolog</fullName>
    </alternativeName>
</protein>
<accession>B3LWU3</accession>
<feature type="chain" id="PRO_0000385634" description="Leucine-rich repeat protein soc-2 homolog">
    <location>
        <begin position="1"/>
        <end position="641"/>
    </location>
</feature>
<feature type="repeat" description="LRR 1">
    <location>
        <begin position="161"/>
        <end position="182"/>
    </location>
</feature>
<feature type="repeat" description="LRR 2">
    <location>
        <begin position="184"/>
        <end position="205"/>
    </location>
</feature>
<feature type="repeat" description="LRR 3">
    <location>
        <begin position="207"/>
        <end position="228"/>
    </location>
</feature>
<feature type="repeat" description="LRR 4">
    <location>
        <begin position="230"/>
        <end position="251"/>
    </location>
</feature>
<feature type="repeat" description="LRR 5">
    <location>
        <begin position="253"/>
        <end position="274"/>
    </location>
</feature>
<feature type="repeat" description="LRR 6">
    <location>
        <begin position="276"/>
        <end position="297"/>
    </location>
</feature>
<feature type="repeat" description="LRR 7">
    <location>
        <begin position="299"/>
        <end position="320"/>
    </location>
</feature>
<feature type="repeat" description="LRR 8">
    <location>
        <begin position="322"/>
        <end position="343"/>
    </location>
</feature>
<feature type="repeat" description="LRR 9">
    <location>
        <begin position="345"/>
        <end position="367"/>
    </location>
</feature>
<feature type="repeat" description="LRR 10">
    <location>
        <begin position="368"/>
        <end position="389"/>
    </location>
</feature>
<feature type="repeat" description="LRR 11">
    <location>
        <begin position="392"/>
        <end position="413"/>
    </location>
</feature>
<feature type="repeat" description="LRR 12">
    <location>
        <begin position="416"/>
        <end position="437"/>
    </location>
</feature>
<feature type="repeat" description="LRR 13">
    <location>
        <begin position="440"/>
        <end position="461"/>
    </location>
</feature>
<feature type="repeat" description="LRR 14">
    <location>
        <begin position="463"/>
        <end position="484"/>
    </location>
</feature>
<feature type="repeat" description="LRR 15">
    <location>
        <begin position="486"/>
        <end position="507"/>
    </location>
</feature>
<feature type="repeat" description="LRR 16">
    <location>
        <begin position="509"/>
        <end position="530"/>
    </location>
</feature>
<feature type="repeat" description="LRR 17">
    <location>
        <begin position="532"/>
        <end position="553"/>
    </location>
</feature>
<feature type="repeat" description="LRR 18">
    <location>
        <begin position="555"/>
        <end position="576"/>
    </location>
</feature>
<feature type="repeat" description="LRR 19">
    <location>
        <begin position="578"/>
        <end position="600"/>
    </location>
</feature>
<feature type="repeat" description="LRR 20">
    <location>
        <begin position="602"/>
        <end position="623"/>
    </location>
</feature>
<feature type="region of interest" description="Disordered" evidence="2">
    <location>
        <begin position="1"/>
        <end position="146"/>
    </location>
</feature>
<feature type="compositionally biased region" description="Low complexity" evidence="2">
    <location>
        <begin position="1"/>
        <end position="19"/>
    </location>
</feature>
<feature type="compositionally biased region" description="Gly residues" evidence="2">
    <location>
        <begin position="24"/>
        <end position="56"/>
    </location>
</feature>
<feature type="compositionally biased region" description="Low complexity" evidence="2">
    <location>
        <begin position="96"/>
        <end position="106"/>
    </location>
</feature>
<organism>
    <name type="scientific">Drosophila ananassae</name>
    <name type="common">Fruit fly</name>
    <dbReference type="NCBI Taxonomy" id="7217"/>
    <lineage>
        <taxon>Eukaryota</taxon>
        <taxon>Metazoa</taxon>
        <taxon>Ecdysozoa</taxon>
        <taxon>Arthropoda</taxon>
        <taxon>Hexapoda</taxon>
        <taxon>Insecta</taxon>
        <taxon>Pterygota</taxon>
        <taxon>Neoptera</taxon>
        <taxon>Endopterygota</taxon>
        <taxon>Diptera</taxon>
        <taxon>Brachycera</taxon>
        <taxon>Muscomorpha</taxon>
        <taxon>Ephydroidea</taxon>
        <taxon>Drosophilidae</taxon>
        <taxon>Drosophila</taxon>
        <taxon>Sophophora</taxon>
    </lineage>
</organism>
<comment type="function">
    <text evidence="1">Acts as a Ras effector and participates in MAPK pathway activation. Probably acts as a regulatory subunit of protein phosphatase that specifically dephosphorylates Raf kinase and stimulate Raf activity at specialized signaling complexes upon Ras activation (By similarity).</text>
</comment>
<comment type="similarity">
    <text evidence="3">Belongs to the SHOC2 family.</text>
</comment>
<sequence>MNLCSSGATASTTSLSSTGQAERSGGGGVAGGGGISNGGGGGGGVTGSGGGGGGNTSDGLSEATHCFGGSGGGATASGPEETINAISPANGGGASGAQQPSGSNGQLHNENNAIMPPETRPKMVTVKHPESNKPKPTTKKSKPIQADQDVIKALQRCRDEGIKRLDLSKSSITVIPSTVKDCVQITELYLYSNKIGQLPPEIGCLVNLRNLALNENSLTSLPESLQNCNQLKVLDLRHNKLAEIPPVIYRLRSLTTLYLRFNRITAVADDLRQLVNLTMLSLRENKIRELGSAIGALVNLTTLDVSHNHLEHLPEDIGNCVNLSALDLQHNELLDIPDSIGNLKSLVRLGMRYNRLTSVPATLKNCKCMDEFNVEGNGITQLPDGMLASLSGLTTITLSRNQFTSYPTGGPAQFTNVYSINLEHNRIDKIPYGIFSRAKGLTKLNMKENMLTALPLDIGTWVNMVELNLATNALQKLPDDIMNLQNLEILILSNNMLKKIPNTIGNLRRLRILDLEENRIETLPHEIGLLHELQRLILQTNQITMLPRSIGHLGNLTHLSVSENNLQFLPEEIGSLESLENLYINQNPGLEKLPFELALCQNLKYLNIDKCPLSTIPPEIQAGGPSLVLQWLKMHSPYRQM</sequence>
<proteinExistence type="inferred from homology"/>
<evidence type="ECO:0000250" key="1"/>
<evidence type="ECO:0000256" key="2">
    <source>
        <dbReference type="SAM" id="MobiDB-lite"/>
    </source>
</evidence>
<evidence type="ECO:0000305" key="3"/>
<keyword id="KW-0433">Leucine-rich repeat</keyword>
<keyword id="KW-1185">Reference proteome</keyword>
<keyword id="KW-0677">Repeat</keyword>
<gene>
    <name type="primary">Sur-8</name>
    <name type="ORF">GF16883</name>
</gene>
<dbReference type="EMBL" id="CH902617">
    <property type="protein sequence ID" value="EDV42731.1"/>
    <property type="molecule type" value="Genomic_DNA"/>
</dbReference>
<dbReference type="RefSeq" id="XP_001954170.2">
    <property type="nucleotide sequence ID" value="XM_001954134.2"/>
</dbReference>
<dbReference type="SMR" id="B3LWU3"/>
<dbReference type="FunCoup" id="B3LWU3">
    <property type="interactions" value="2053"/>
</dbReference>
<dbReference type="STRING" id="7217.B3LWU3"/>
<dbReference type="EnsemblMetazoa" id="FBtr0121583">
    <property type="protein sequence ID" value="FBpp0120075"/>
    <property type="gene ID" value="FBgn0093903"/>
</dbReference>
<dbReference type="EnsemblMetazoa" id="XM_001954134.4">
    <property type="protein sequence ID" value="XP_001954170.3"/>
    <property type="gene ID" value="LOC6499676"/>
</dbReference>
<dbReference type="GeneID" id="6499676"/>
<dbReference type="KEGG" id="dan:6499676"/>
<dbReference type="CTD" id="42093"/>
<dbReference type="eggNOG" id="KOG0619">
    <property type="taxonomic scope" value="Eukaryota"/>
</dbReference>
<dbReference type="HOGENOM" id="CLU_000288_18_23_1"/>
<dbReference type="InParanoid" id="B3LWU3"/>
<dbReference type="OMA" id="NQFTSYP"/>
<dbReference type="OrthoDB" id="676979at2759"/>
<dbReference type="PhylomeDB" id="B3LWU3"/>
<dbReference type="ChiTaRS" id="Sur-8">
    <property type="organism name" value="fly"/>
</dbReference>
<dbReference type="Proteomes" id="UP000007801">
    <property type="component" value="Unassembled WGS sequence"/>
</dbReference>
<dbReference type="GO" id="GO:0005737">
    <property type="term" value="C:cytoplasm"/>
    <property type="evidence" value="ECO:0007669"/>
    <property type="project" value="TreeGrafter"/>
</dbReference>
<dbReference type="FunFam" id="3.80.10.10:FF:000031">
    <property type="entry name" value="leucine-rich repeat protein SHOC-2"/>
    <property type="match status" value="1"/>
</dbReference>
<dbReference type="FunFam" id="3.80.10.10:FF:000115">
    <property type="entry name" value="leucine-rich repeat protein SHOC-2"/>
    <property type="match status" value="1"/>
</dbReference>
<dbReference type="FunFam" id="3.80.10.10:FF:000281">
    <property type="entry name" value="Leucine-rich repeat protein soc-2"/>
    <property type="match status" value="1"/>
</dbReference>
<dbReference type="FunFam" id="3.80.10.10:FF:000450">
    <property type="entry name" value="Leucine-rich repeat protein soc-2"/>
    <property type="match status" value="1"/>
</dbReference>
<dbReference type="Gene3D" id="3.80.10.10">
    <property type="entry name" value="Ribonuclease Inhibitor"/>
    <property type="match status" value="3"/>
</dbReference>
<dbReference type="InterPro" id="IPR001611">
    <property type="entry name" value="Leu-rich_rpt"/>
</dbReference>
<dbReference type="InterPro" id="IPR003591">
    <property type="entry name" value="Leu-rich_rpt_typical-subtyp"/>
</dbReference>
<dbReference type="InterPro" id="IPR032675">
    <property type="entry name" value="LRR_dom_sf"/>
</dbReference>
<dbReference type="InterPro" id="IPR050216">
    <property type="entry name" value="LRR_domain-containing"/>
</dbReference>
<dbReference type="InterPro" id="IPR055414">
    <property type="entry name" value="LRR_R13L4/SHOC2-like"/>
</dbReference>
<dbReference type="PANTHER" id="PTHR48051">
    <property type="match status" value="1"/>
</dbReference>
<dbReference type="PANTHER" id="PTHR48051:SF1">
    <property type="entry name" value="RAS SUPPRESSOR PROTEIN 1"/>
    <property type="match status" value="1"/>
</dbReference>
<dbReference type="Pfam" id="PF23598">
    <property type="entry name" value="LRR_14"/>
    <property type="match status" value="2"/>
</dbReference>
<dbReference type="Pfam" id="PF13855">
    <property type="entry name" value="LRR_8"/>
    <property type="match status" value="1"/>
</dbReference>
<dbReference type="SMART" id="SM00364">
    <property type="entry name" value="LRR_BAC"/>
    <property type="match status" value="10"/>
</dbReference>
<dbReference type="SMART" id="SM00365">
    <property type="entry name" value="LRR_SD22"/>
    <property type="match status" value="7"/>
</dbReference>
<dbReference type="SMART" id="SM00369">
    <property type="entry name" value="LRR_TYP"/>
    <property type="match status" value="13"/>
</dbReference>
<dbReference type="SUPFAM" id="SSF52058">
    <property type="entry name" value="L domain-like"/>
    <property type="match status" value="2"/>
</dbReference>
<dbReference type="PROSITE" id="PS51450">
    <property type="entry name" value="LRR"/>
    <property type="match status" value="18"/>
</dbReference>